<dbReference type="EC" id="7.1.2.2" evidence="2"/>
<dbReference type="EMBL" id="CP000555">
    <property type="protein sequence ID" value="ABM93157.1"/>
    <property type="molecule type" value="Genomic_DNA"/>
</dbReference>
<dbReference type="RefSeq" id="WP_011827796.1">
    <property type="nucleotide sequence ID" value="NC_008825.1"/>
</dbReference>
<dbReference type="SMR" id="A2SC68"/>
<dbReference type="STRING" id="420662.Mpe_A0195"/>
<dbReference type="KEGG" id="mpt:Mpe_A0195"/>
<dbReference type="eggNOG" id="COG0056">
    <property type="taxonomic scope" value="Bacteria"/>
</dbReference>
<dbReference type="HOGENOM" id="CLU_010091_2_1_4"/>
<dbReference type="Proteomes" id="UP000000366">
    <property type="component" value="Chromosome"/>
</dbReference>
<dbReference type="GO" id="GO:0005886">
    <property type="term" value="C:plasma membrane"/>
    <property type="evidence" value="ECO:0007669"/>
    <property type="project" value="UniProtKB-SubCell"/>
</dbReference>
<dbReference type="GO" id="GO:0045259">
    <property type="term" value="C:proton-transporting ATP synthase complex"/>
    <property type="evidence" value="ECO:0007669"/>
    <property type="project" value="UniProtKB-KW"/>
</dbReference>
<dbReference type="GO" id="GO:0043531">
    <property type="term" value="F:ADP binding"/>
    <property type="evidence" value="ECO:0007669"/>
    <property type="project" value="TreeGrafter"/>
</dbReference>
<dbReference type="GO" id="GO:0005524">
    <property type="term" value="F:ATP binding"/>
    <property type="evidence" value="ECO:0007669"/>
    <property type="project" value="UniProtKB-UniRule"/>
</dbReference>
<dbReference type="GO" id="GO:0046933">
    <property type="term" value="F:proton-transporting ATP synthase activity, rotational mechanism"/>
    <property type="evidence" value="ECO:0007669"/>
    <property type="project" value="UniProtKB-UniRule"/>
</dbReference>
<dbReference type="CDD" id="cd18113">
    <property type="entry name" value="ATP-synt_F1_alpha_C"/>
    <property type="match status" value="1"/>
</dbReference>
<dbReference type="CDD" id="cd18116">
    <property type="entry name" value="ATP-synt_F1_alpha_N"/>
    <property type="match status" value="1"/>
</dbReference>
<dbReference type="CDD" id="cd01132">
    <property type="entry name" value="F1-ATPase_alpha_CD"/>
    <property type="match status" value="1"/>
</dbReference>
<dbReference type="FunFam" id="1.20.150.20:FF:000001">
    <property type="entry name" value="ATP synthase subunit alpha"/>
    <property type="match status" value="1"/>
</dbReference>
<dbReference type="FunFam" id="2.40.30.20:FF:000001">
    <property type="entry name" value="ATP synthase subunit alpha"/>
    <property type="match status" value="1"/>
</dbReference>
<dbReference type="FunFam" id="3.40.50.300:FF:000002">
    <property type="entry name" value="ATP synthase subunit alpha"/>
    <property type="match status" value="1"/>
</dbReference>
<dbReference type="Gene3D" id="2.40.30.20">
    <property type="match status" value="1"/>
</dbReference>
<dbReference type="Gene3D" id="1.20.150.20">
    <property type="entry name" value="ATP synthase alpha/beta chain, C-terminal domain"/>
    <property type="match status" value="1"/>
</dbReference>
<dbReference type="Gene3D" id="3.40.50.300">
    <property type="entry name" value="P-loop containing nucleotide triphosphate hydrolases"/>
    <property type="match status" value="1"/>
</dbReference>
<dbReference type="HAMAP" id="MF_01346">
    <property type="entry name" value="ATP_synth_alpha_bact"/>
    <property type="match status" value="1"/>
</dbReference>
<dbReference type="InterPro" id="IPR023366">
    <property type="entry name" value="ATP_synth_asu-like_sf"/>
</dbReference>
<dbReference type="InterPro" id="IPR000793">
    <property type="entry name" value="ATP_synth_asu_C"/>
</dbReference>
<dbReference type="InterPro" id="IPR038376">
    <property type="entry name" value="ATP_synth_asu_C_sf"/>
</dbReference>
<dbReference type="InterPro" id="IPR033732">
    <property type="entry name" value="ATP_synth_F1_a_nt-bd_dom"/>
</dbReference>
<dbReference type="InterPro" id="IPR005294">
    <property type="entry name" value="ATP_synth_F1_asu"/>
</dbReference>
<dbReference type="InterPro" id="IPR020003">
    <property type="entry name" value="ATPase_a/bsu_AS"/>
</dbReference>
<dbReference type="InterPro" id="IPR004100">
    <property type="entry name" value="ATPase_F1/V1/A1_a/bsu_N"/>
</dbReference>
<dbReference type="InterPro" id="IPR036121">
    <property type="entry name" value="ATPase_F1/V1/A1_a/bsu_N_sf"/>
</dbReference>
<dbReference type="InterPro" id="IPR000194">
    <property type="entry name" value="ATPase_F1/V1/A1_a/bsu_nucl-bd"/>
</dbReference>
<dbReference type="InterPro" id="IPR027417">
    <property type="entry name" value="P-loop_NTPase"/>
</dbReference>
<dbReference type="NCBIfam" id="TIGR00962">
    <property type="entry name" value="atpA"/>
    <property type="match status" value="1"/>
</dbReference>
<dbReference type="NCBIfam" id="NF009884">
    <property type="entry name" value="PRK13343.1"/>
    <property type="match status" value="1"/>
</dbReference>
<dbReference type="PANTHER" id="PTHR48082">
    <property type="entry name" value="ATP SYNTHASE SUBUNIT ALPHA, MITOCHONDRIAL"/>
    <property type="match status" value="1"/>
</dbReference>
<dbReference type="PANTHER" id="PTHR48082:SF2">
    <property type="entry name" value="ATP SYNTHASE SUBUNIT ALPHA, MITOCHONDRIAL"/>
    <property type="match status" value="1"/>
</dbReference>
<dbReference type="Pfam" id="PF00006">
    <property type="entry name" value="ATP-synt_ab"/>
    <property type="match status" value="1"/>
</dbReference>
<dbReference type="Pfam" id="PF00306">
    <property type="entry name" value="ATP-synt_ab_C"/>
    <property type="match status" value="1"/>
</dbReference>
<dbReference type="Pfam" id="PF02874">
    <property type="entry name" value="ATP-synt_ab_N"/>
    <property type="match status" value="1"/>
</dbReference>
<dbReference type="PIRSF" id="PIRSF039088">
    <property type="entry name" value="F_ATPase_subunit_alpha"/>
    <property type="match status" value="1"/>
</dbReference>
<dbReference type="SUPFAM" id="SSF47917">
    <property type="entry name" value="C-terminal domain of alpha and beta subunits of F1 ATP synthase"/>
    <property type="match status" value="1"/>
</dbReference>
<dbReference type="SUPFAM" id="SSF50615">
    <property type="entry name" value="N-terminal domain of alpha and beta subunits of F1 ATP synthase"/>
    <property type="match status" value="1"/>
</dbReference>
<dbReference type="SUPFAM" id="SSF52540">
    <property type="entry name" value="P-loop containing nucleoside triphosphate hydrolases"/>
    <property type="match status" value="1"/>
</dbReference>
<dbReference type="PROSITE" id="PS00152">
    <property type="entry name" value="ATPASE_ALPHA_BETA"/>
    <property type="match status" value="1"/>
</dbReference>
<accession>A2SC68</accession>
<sequence length="517" mass="55231">MQLNPAEISELIKSRIEGLGASSDIRNQGTVVSVTDGIVRVHGLSEVMAGEMLEFPATKDGQPTFGLALNLERDSVGAVILGEYEHISEGDTVKCTGRILEVPVGPELIGRVVNALGQPIDGKGPINAKMTDVIEKVAPGVIARKSVDQPVQTGLKSIDSMVPVGRGQRELIIGDRQTGKTAVAIDAIINQKGQNMTCVYVAIGQKASSIKNVVRSLEAAGAMSYTIVVAASASESAAMQYVSAYSGCTMGEYFRDRGEDALIIYDDLSKQAVAYRQVSLLLRRPPGREAYPGDVFYLHSRLLERAARVNADYVEKFTNGAVKGKTGSLTALPIIETQAGDVSAFVPTNVISITDGQIFLETNLFNAGIRPAINAGISVSRVGGAAQTKLVKGLSGGIRTDLAQYRELAAFAQFASDLDDATRKQLDRGARVTELLKQQQYQPLPISLMAATLYSVNKGFLDDVDVKKVLAFESGLHQFLKTSYAALLKKLEDSKALDKDSEAELAAAIGAFKKSFA</sequence>
<gene>
    <name evidence="2" type="primary">atpA</name>
    <name type="ordered locus">Mpe_A0195</name>
</gene>
<evidence type="ECO:0000250" key="1"/>
<evidence type="ECO:0000255" key="2">
    <source>
        <dbReference type="HAMAP-Rule" id="MF_01346"/>
    </source>
</evidence>
<organism>
    <name type="scientific">Methylibium petroleiphilum (strain ATCC BAA-1232 / LMG 22953 / PM1)</name>
    <dbReference type="NCBI Taxonomy" id="420662"/>
    <lineage>
        <taxon>Bacteria</taxon>
        <taxon>Pseudomonadati</taxon>
        <taxon>Pseudomonadota</taxon>
        <taxon>Betaproteobacteria</taxon>
        <taxon>Burkholderiales</taxon>
        <taxon>Sphaerotilaceae</taxon>
        <taxon>Methylibium</taxon>
    </lineage>
</organism>
<name>ATPA_METPP</name>
<reference key="1">
    <citation type="journal article" date="2007" name="J. Bacteriol.">
        <title>Whole-genome analysis of the methyl tert-butyl ether-degrading beta-proteobacterium Methylibium petroleiphilum PM1.</title>
        <authorList>
            <person name="Kane S.R."/>
            <person name="Chakicherla A.Y."/>
            <person name="Chain P.S.G."/>
            <person name="Schmidt R."/>
            <person name="Shin M.W."/>
            <person name="Legler T.C."/>
            <person name="Scow K.M."/>
            <person name="Larimer F.W."/>
            <person name="Lucas S.M."/>
            <person name="Richardson P.M."/>
            <person name="Hristova K.R."/>
        </authorList>
    </citation>
    <scope>NUCLEOTIDE SEQUENCE [LARGE SCALE GENOMIC DNA]</scope>
    <source>
        <strain>ATCC BAA-1232 / LMG 22953 / PM1</strain>
    </source>
</reference>
<protein>
    <recommendedName>
        <fullName evidence="2">ATP synthase subunit alpha</fullName>
        <ecNumber evidence="2">7.1.2.2</ecNumber>
    </recommendedName>
    <alternativeName>
        <fullName evidence="2">ATP synthase F1 sector subunit alpha</fullName>
    </alternativeName>
    <alternativeName>
        <fullName evidence="2">F-ATPase subunit alpha</fullName>
    </alternativeName>
</protein>
<proteinExistence type="inferred from homology"/>
<feature type="chain" id="PRO_0000302666" description="ATP synthase subunit alpha">
    <location>
        <begin position="1"/>
        <end position="517"/>
    </location>
</feature>
<feature type="binding site" evidence="2">
    <location>
        <begin position="174"/>
        <end position="181"/>
    </location>
    <ligand>
        <name>ATP</name>
        <dbReference type="ChEBI" id="CHEBI:30616"/>
    </ligand>
</feature>
<feature type="site" description="Required for activity" evidence="2">
    <location>
        <position position="378"/>
    </location>
</feature>
<keyword id="KW-0066">ATP synthesis</keyword>
<keyword id="KW-0067">ATP-binding</keyword>
<keyword id="KW-0997">Cell inner membrane</keyword>
<keyword id="KW-1003">Cell membrane</keyword>
<keyword id="KW-0139">CF(1)</keyword>
<keyword id="KW-0375">Hydrogen ion transport</keyword>
<keyword id="KW-0406">Ion transport</keyword>
<keyword id="KW-0472">Membrane</keyword>
<keyword id="KW-0547">Nucleotide-binding</keyword>
<keyword id="KW-1185">Reference proteome</keyword>
<keyword id="KW-1278">Translocase</keyword>
<keyword id="KW-0813">Transport</keyword>
<comment type="function">
    <text evidence="2">Produces ATP from ADP in the presence of a proton gradient across the membrane. The alpha chain is a regulatory subunit.</text>
</comment>
<comment type="catalytic activity">
    <reaction evidence="2">
        <text>ATP + H2O + 4 H(+)(in) = ADP + phosphate + 5 H(+)(out)</text>
        <dbReference type="Rhea" id="RHEA:57720"/>
        <dbReference type="ChEBI" id="CHEBI:15377"/>
        <dbReference type="ChEBI" id="CHEBI:15378"/>
        <dbReference type="ChEBI" id="CHEBI:30616"/>
        <dbReference type="ChEBI" id="CHEBI:43474"/>
        <dbReference type="ChEBI" id="CHEBI:456216"/>
        <dbReference type="EC" id="7.1.2.2"/>
    </reaction>
</comment>
<comment type="subunit">
    <text evidence="1">F-type ATPases have 2 components, CF(1) - the catalytic core - and CF(0) - the membrane proton channel. CF(1) has five subunits: alpha(3), beta(3), gamma(1), delta(1), epsilon(1). CF(0) has four main subunits: a(1), b(1), b'(1) and c(9-12) (By similarity).</text>
</comment>
<comment type="subcellular location">
    <subcellularLocation>
        <location evidence="2">Cell inner membrane</location>
        <topology evidence="2">Peripheral membrane protein</topology>
    </subcellularLocation>
</comment>
<comment type="similarity">
    <text evidence="2">Belongs to the ATPase alpha/beta chains family.</text>
</comment>